<dbReference type="EMBL" id="L41216">
    <property type="protein sequence ID" value="AAA74212.1"/>
    <property type="molecule type" value="Genomic_DNA"/>
</dbReference>
<dbReference type="SMR" id="Q84292"/>
<dbReference type="IntAct" id="Q84292">
    <property type="interactions" value="26"/>
</dbReference>
<dbReference type="MINT" id="Q84292"/>
<dbReference type="Proteomes" id="UP000007675">
    <property type="component" value="Genome"/>
</dbReference>
<dbReference type="GO" id="GO:0030430">
    <property type="term" value="C:host cell cytoplasm"/>
    <property type="evidence" value="ECO:0007669"/>
    <property type="project" value="UniProtKB-SubCell"/>
</dbReference>
<dbReference type="GO" id="GO:0042025">
    <property type="term" value="C:host cell nucleus"/>
    <property type="evidence" value="ECO:0007669"/>
    <property type="project" value="UniProtKB-SubCell"/>
</dbReference>
<dbReference type="GO" id="GO:0003677">
    <property type="term" value="F:DNA binding"/>
    <property type="evidence" value="ECO:0007669"/>
    <property type="project" value="UniProtKB-UniRule"/>
</dbReference>
<dbReference type="GO" id="GO:0003700">
    <property type="term" value="F:DNA-binding transcription factor activity"/>
    <property type="evidence" value="ECO:0007669"/>
    <property type="project" value="UniProtKB-UniRule"/>
</dbReference>
<dbReference type="GO" id="GO:0019904">
    <property type="term" value="F:protein domain specific binding"/>
    <property type="evidence" value="ECO:0007669"/>
    <property type="project" value="UniProtKB-UniRule"/>
</dbReference>
<dbReference type="GO" id="GO:0008270">
    <property type="term" value="F:zinc ion binding"/>
    <property type="evidence" value="ECO:0007669"/>
    <property type="project" value="UniProtKB-KW"/>
</dbReference>
<dbReference type="GO" id="GO:0006351">
    <property type="term" value="P:DNA-templated transcription"/>
    <property type="evidence" value="ECO:0007669"/>
    <property type="project" value="UniProtKB-UniRule"/>
</dbReference>
<dbReference type="GO" id="GO:0039645">
    <property type="term" value="P:symbiont-mediated perturbation of host cell cycle G1/S transition checkpoint"/>
    <property type="evidence" value="ECO:0007669"/>
    <property type="project" value="UniProtKB-UniRule"/>
</dbReference>
<dbReference type="GO" id="GO:0052170">
    <property type="term" value="P:symbiont-mediated suppression of host innate immune response"/>
    <property type="evidence" value="ECO:0007669"/>
    <property type="project" value="UniProtKB-KW"/>
</dbReference>
<dbReference type="GO" id="GO:0039502">
    <property type="term" value="P:symbiont-mediated suppression of host type I interferon-mediated signaling pathway"/>
    <property type="evidence" value="ECO:0007669"/>
    <property type="project" value="UniProtKB-UniRule"/>
</dbReference>
<dbReference type="Gene3D" id="3.30.160.330">
    <property type="match status" value="1"/>
</dbReference>
<dbReference type="HAMAP" id="MF_04004">
    <property type="entry name" value="PPV_E7"/>
    <property type="match status" value="1"/>
</dbReference>
<dbReference type="InterPro" id="IPR000148">
    <property type="entry name" value="Papilloma_E7"/>
</dbReference>
<dbReference type="Pfam" id="PF00527">
    <property type="entry name" value="E7"/>
    <property type="match status" value="1"/>
</dbReference>
<dbReference type="PIRSF" id="PIRSF003407">
    <property type="entry name" value="Papvi_E7"/>
    <property type="match status" value="1"/>
</dbReference>
<dbReference type="SUPFAM" id="SSF161234">
    <property type="entry name" value="E7 C-terminal domain-like"/>
    <property type="match status" value="1"/>
</dbReference>
<comment type="function">
    <text evidence="1">Plays a role in viral genome replication by driving entry of quiescent cells into the cell cycle. Stimulation of progression from G1 to S phase allows the virus to efficiently use the cellular DNA replicating machinery to achieve viral genome replication. E7 protein has both transforming and trans-activating activities. Induces the disassembly of the E2F1 transcription factor from RB1, with subsequent transcriptional activation of E2F1-regulated S-phase genes. Interferes with host histone deacetylation mediated by HDAC1 and HDAC2, leading to transcription activation. Also plays a role in the inhibition of both antiviral and antiproliferative functions of host interferon alpha. Interaction with host TMEM173/STING impairs the ability of TMEM173/STING to sense cytosolic DNA and promote the production of type I interferon (IFN-alpha and IFN-beta).</text>
</comment>
<comment type="subunit">
    <text evidence="1">Homodimer. Homooligomer. Interacts with host RB1; this interaction induces dissociation of RB1-E2F1 complex thereby disrupting RB1 activity. Interacts with host EP300; this interaction represses EP300 transcriptional activity. Interacts with protein E2; this interaction inhibits E7 oncogenic activity. Interacts with host TMEM173/STING; this interaction impairs the ability of TMEM173/STING to sense cytosolic DNA and promote the production of type I interferon (IFN-alpha and IFN-beta).</text>
</comment>
<comment type="subcellular location">
    <subcellularLocation>
        <location evidence="1">Host cytoplasm</location>
    </subcellularLocation>
    <subcellularLocation>
        <location evidence="1">Host nucleus</location>
    </subcellularLocation>
    <text evidence="1">Predominantly found in the host nucleus.</text>
</comment>
<comment type="domain">
    <text evidence="1">The E7 terminal domain is an intrinsically disordered domain, whose flexibility and conformational transitions confer target adaptability to the oncoprotein. It allows adaptation to a variety of protein targets and exposes the PEST degradation sequence that regulates its turnover in the cell.</text>
</comment>
<comment type="PTM">
    <text evidence="1">Highly phosphorylated.</text>
</comment>
<comment type="similarity">
    <text evidence="1">Belongs to the papillomaviridae E7 protein family.</text>
</comment>
<evidence type="ECO:0000255" key="1">
    <source>
        <dbReference type="HAMAP-Rule" id="MF_04004"/>
    </source>
</evidence>
<organismHost>
    <name type="scientific">Homo sapiens</name>
    <name type="common">Human</name>
    <dbReference type="NCBI Taxonomy" id="9606"/>
</organismHost>
<proteinExistence type="inferred from homology"/>
<accession>Q84292</accession>
<reference key="1">
    <citation type="journal article" date="1995" name="Virology">
        <title>Sequence determination of human papillomavirus type 6a and assembly of virus-like particles in Saccharomyces cerevisiae.</title>
        <authorList>
            <person name="Hofmann K.J."/>
            <person name="Cook J.C."/>
            <person name="Joyce J.G."/>
            <person name="Brown D.R."/>
            <person name="Schultz L.D."/>
            <person name="George H.A."/>
            <person name="Rosolowsky M."/>
            <person name="Fife K.H."/>
            <person name="Jansen K.U."/>
        </authorList>
    </citation>
    <scope>NUCLEOTIDE SEQUENCE [GENOMIC DNA]</scope>
</reference>
<reference key="2">
    <citation type="journal article" date="2002" name="Rev. Med. Virol.">
        <title>Interactions of SV40 large T antigen and other viral proteins with retinoblastoma tumour suppressor.</title>
        <authorList>
            <person name="Lee C."/>
            <person name="Cho Y."/>
        </authorList>
    </citation>
    <scope>REVIEW</scope>
</reference>
<protein>
    <recommendedName>
        <fullName evidence="1">Protein E7</fullName>
    </recommendedName>
</protein>
<keyword id="KW-0010">Activator</keyword>
<keyword id="KW-0238">DNA-binding</keyword>
<keyword id="KW-0244">Early protein</keyword>
<keyword id="KW-1078">G1/S host cell cycle checkpoint dysregulation by virus</keyword>
<keyword id="KW-1035">Host cytoplasm</keyword>
<keyword id="KW-1048">Host nucleus</keyword>
<keyword id="KW-0945">Host-virus interaction</keyword>
<keyword id="KW-1090">Inhibition of host innate immune response by virus</keyword>
<keyword id="KW-1114">Inhibition of host interferon signaling pathway by virus</keyword>
<keyword id="KW-0922">Interferon antiviral system evasion</keyword>
<keyword id="KW-0479">Metal-binding</keyword>
<keyword id="KW-1121">Modulation of host cell cycle by virus</keyword>
<keyword id="KW-0553">Oncogene</keyword>
<keyword id="KW-0804">Transcription</keyword>
<keyword id="KW-0805">Transcription regulation</keyword>
<keyword id="KW-0899">Viral immunoevasion</keyword>
<keyword id="KW-0862">Zinc</keyword>
<keyword id="KW-0863">Zinc-finger</keyword>
<organism>
    <name type="scientific">Human papillomavirus type 6a</name>
    <dbReference type="NCBI Taxonomy" id="37122"/>
    <lineage>
        <taxon>Viruses</taxon>
        <taxon>Monodnaviria</taxon>
        <taxon>Shotokuvirae</taxon>
        <taxon>Cossaviricota</taxon>
        <taxon>Papovaviricetes</taxon>
        <taxon>Zurhausenvirales</taxon>
        <taxon>Papillomaviridae</taxon>
        <taxon>Firstpapillomavirinae</taxon>
        <taxon>Alphapapillomavirus</taxon>
        <taxon>Alphapapillomavirus 10</taxon>
    </lineage>
</organism>
<sequence>MHGRHVTLKDIVLDLQPPDPVGLHCYEQLVDSSEDEVDEVDGQDSQPLKQHFQIVTCCCGCDSNVRLVVQCTETDIREVQQLLLGTLDIVCPICAPKT</sequence>
<feature type="chain" id="PRO_0000133404" description="Protein E7">
    <location>
        <begin position="1"/>
        <end position="98"/>
    </location>
</feature>
<feature type="zinc finger region" evidence="1">
    <location>
        <begin position="58"/>
        <end position="94"/>
    </location>
</feature>
<feature type="region of interest" description="E7 terminal domain" evidence="1">
    <location>
        <begin position="1"/>
        <end position="42"/>
    </location>
</feature>
<feature type="short sequence motif" description="LXCXE motif; interaction with host RB1 and TMEM173/STING" evidence="1">
    <location>
        <begin position="23"/>
        <end position="27"/>
    </location>
</feature>
<feature type="short sequence motif" description="Nuclear export signal" evidence="1">
    <location>
        <begin position="76"/>
        <end position="84"/>
    </location>
</feature>
<gene>
    <name evidence="1" type="primary">E7</name>
</gene>
<name>VE7_HPV6A</name>